<dbReference type="EC" id="4.1.1.37" evidence="1"/>
<dbReference type="EMBL" id="CP000361">
    <property type="protein sequence ID" value="ABV68026.1"/>
    <property type="molecule type" value="Genomic_DNA"/>
</dbReference>
<dbReference type="RefSeq" id="WP_012147745.1">
    <property type="nucleotide sequence ID" value="NC_009850.1"/>
</dbReference>
<dbReference type="SMR" id="A8EVQ3"/>
<dbReference type="STRING" id="367737.Abu_1786"/>
<dbReference type="GeneID" id="24305047"/>
<dbReference type="KEGG" id="abu:Abu_1786"/>
<dbReference type="eggNOG" id="COG0407">
    <property type="taxonomic scope" value="Bacteria"/>
</dbReference>
<dbReference type="HOGENOM" id="CLU_040933_0_0_7"/>
<dbReference type="UniPathway" id="UPA00251">
    <property type="reaction ID" value="UER00321"/>
</dbReference>
<dbReference type="Proteomes" id="UP000001136">
    <property type="component" value="Chromosome"/>
</dbReference>
<dbReference type="GO" id="GO:0005829">
    <property type="term" value="C:cytosol"/>
    <property type="evidence" value="ECO:0007669"/>
    <property type="project" value="TreeGrafter"/>
</dbReference>
<dbReference type="GO" id="GO:0004853">
    <property type="term" value="F:uroporphyrinogen decarboxylase activity"/>
    <property type="evidence" value="ECO:0007669"/>
    <property type="project" value="UniProtKB-UniRule"/>
</dbReference>
<dbReference type="GO" id="GO:0019353">
    <property type="term" value="P:protoporphyrinogen IX biosynthetic process from glutamate"/>
    <property type="evidence" value="ECO:0007669"/>
    <property type="project" value="TreeGrafter"/>
</dbReference>
<dbReference type="CDD" id="cd00717">
    <property type="entry name" value="URO-D"/>
    <property type="match status" value="1"/>
</dbReference>
<dbReference type="FunFam" id="3.20.20.210:FF:000007">
    <property type="entry name" value="Uroporphyrinogen decarboxylase"/>
    <property type="match status" value="1"/>
</dbReference>
<dbReference type="Gene3D" id="3.20.20.210">
    <property type="match status" value="1"/>
</dbReference>
<dbReference type="HAMAP" id="MF_00218">
    <property type="entry name" value="URO_D"/>
    <property type="match status" value="1"/>
</dbReference>
<dbReference type="InterPro" id="IPR038071">
    <property type="entry name" value="UROD/MetE-like_sf"/>
</dbReference>
<dbReference type="InterPro" id="IPR006361">
    <property type="entry name" value="Uroporphyrinogen_deCO2ase_HemE"/>
</dbReference>
<dbReference type="InterPro" id="IPR000257">
    <property type="entry name" value="Uroporphyrinogen_deCOase"/>
</dbReference>
<dbReference type="NCBIfam" id="TIGR01464">
    <property type="entry name" value="hemE"/>
    <property type="match status" value="1"/>
</dbReference>
<dbReference type="PANTHER" id="PTHR21091">
    <property type="entry name" value="METHYLTETRAHYDROFOLATE:HOMOCYSTEINE METHYLTRANSFERASE RELATED"/>
    <property type="match status" value="1"/>
</dbReference>
<dbReference type="PANTHER" id="PTHR21091:SF169">
    <property type="entry name" value="UROPORPHYRINOGEN DECARBOXYLASE"/>
    <property type="match status" value="1"/>
</dbReference>
<dbReference type="Pfam" id="PF01208">
    <property type="entry name" value="URO-D"/>
    <property type="match status" value="1"/>
</dbReference>
<dbReference type="SUPFAM" id="SSF51726">
    <property type="entry name" value="UROD/MetE-like"/>
    <property type="match status" value="1"/>
</dbReference>
<dbReference type="PROSITE" id="PS00906">
    <property type="entry name" value="UROD_1"/>
    <property type="match status" value="1"/>
</dbReference>
<dbReference type="PROSITE" id="PS00907">
    <property type="entry name" value="UROD_2"/>
    <property type="match status" value="1"/>
</dbReference>
<name>DCUP_ALIB4</name>
<sequence>MSKIFVDACFRKETPYTPVWMMRQAGRYLPEYMEVRAKAGNFLNLCHNPELAAEVTIQPLDIVGVDAAILFSDILVVPNEMGMKLDFLKGEGPVFDKPIKTEADLDALIGGEEAANKLTYVYETIKILKQRLPQDKALIGFTGAPWTLATYMIEGQGTKTYNLCKKMMYSNPEFLHKILRRVTDVVKFYMEKQIEAGVDVVQIFDSWAAAIEPSKYDEFSWKYMVEIAEYLKEKYPHIPVIMFPKGIAAFIERGLVYGNFDVFGVDWGTPMALAKEKLGEKYVLQGNMEPCRLYSKEATTMCVEGIQNIMGGNGHIFNLGHGILPDVPVENAIHFVKECQRVSKKA</sequence>
<feature type="chain" id="PRO_0000325623" description="Uroporphyrinogen decarboxylase">
    <location>
        <begin position="1"/>
        <end position="346"/>
    </location>
</feature>
<feature type="binding site" evidence="1">
    <location>
        <begin position="23"/>
        <end position="27"/>
    </location>
    <ligand>
        <name>substrate</name>
    </ligand>
</feature>
<feature type="binding site" evidence="1">
    <location>
        <position position="73"/>
    </location>
    <ligand>
        <name>substrate</name>
    </ligand>
</feature>
<feature type="binding site" evidence="1">
    <location>
        <position position="151"/>
    </location>
    <ligand>
        <name>substrate</name>
    </ligand>
</feature>
<feature type="binding site" evidence="1">
    <location>
        <position position="206"/>
    </location>
    <ligand>
        <name>substrate</name>
    </ligand>
</feature>
<feature type="binding site" evidence="1">
    <location>
        <position position="321"/>
    </location>
    <ligand>
        <name>substrate</name>
    </ligand>
</feature>
<feature type="site" description="Transition state stabilizer" evidence="1">
    <location>
        <position position="73"/>
    </location>
</feature>
<proteinExistence type="inferred from homology"/>
<keyword id="KW-0963">Cytoplasm</keyword>
<keyword id="KW-0210">Decarboxylase</keyword>
<keyword id="KW-0456">Lyase</keyword>
<keyword id="KW-0627">Porphyrin biosynthesis</keyword>
<keyword id="KW-1185">Reference proteome</keyword>
<accession>A8EVQ3</accession>
<reference key="1">
    <citation type="journal article" date="2007" name="PLoS ONE">
        <title>The complete genome sequence and analysis of the Epsilonproteobacterium Arcobacter butzleri.</title>
        <authorList>
            <person name="Miller W.G."/>
            <person name="Parker C.T."/>
            <person name="Rubenfield M."/>
            <person name="Mendz G.L."/>
            <person name="Woesten M.M.S.M."/>
            <person name="Ussery D.W."/>
            <person name="Stolz J.F."/>
            <person name="Binnewies T.T."/>
            <person name="Hallin P.F."/>
            <person name="Wang G."/>
            <person name="Malek J.A."/>
            <person name="Rogosin A."/>
            <person name="Stanker L.H."/>
            <person name="Mandrell R.E."/>
        </authorList>
    </citation>
    <scope>NUCLEOTIDE SEQUENCE [LARGE SCALE GENOMIC DNA]</scope>
    <source>
        <strain>RM4018</strain>
    </source>
</reference>
<comment type="function">
    <text evidence="1">Catalyzes the decarboxylation of four acetate groups of uroporphyrinogen-III to yield coproporphyrinogen-III.</text>
</comment>
<comment type="catalytic activity">
    <reaction evidence="1">
        <text>uroporphyrinogen III + 4 H(+) = coproporphyrinogen III + 4 CO2</text>
        <dbReference type="Rhea" id="RHEA:19865"/>
        <dbReference type="ChEBI" id="CHEBI:15378"/>
        <dbReference type="ChEBI" id="CHEBI:16526"/>
        <dbReference type="ChEBI" id="CHEBI:57308"/>
        <dbReference type="ChEBI" id="CHEBI:57309"/>
        <dbReference type="EC" id="4.1.1.37"/>
    </reaction>
</comment>
<comment type="pathway">
    <text evidence="1">Porphyrin-containing compound metabolism; protoporphyrin-IX biosynthesis; coproporphyrinogen-III from 5-aminolevulinate: step 4/4.</text>
</comment>
<comment type="subunit">
    <text evidence="1">Homodimer.</text>
</comment>
<comment type="subcellular location">
    <subcellularLocation>
        <location evidence="1">Cytoplasm</location>
    </subcellularLocation>
</comment>
<comment type="similarity">
    <text evidence="1">Belongs to the uroporphyrinogen decarboxylase family.</text>
</comment>
<gene>
    <name evidence="1" type="primary">hemE</name>
    <name type="ordered locus">Abu_1786</name>
</gene>
<protein>
    <recommendedName>
        <fullName evidence="1">Uroporphyrinogen decarboxylase</fullName>
        <shortName evidence="1">UPD</shortName>
        <shortName evidence="1">URO-D</shortName>
        <ecNumber evidence="1">4.1.1.37</ecNumber>
    </recommendedName>
</protein>
<evidence type="ECO:0000255" key="1">
    <source>
        <dbReference type="HAMAP-Rule" id="MF_00218"/>
    </source>
</evidence>
<organism>
    <name type="scientific">Aliarcobacter butzleri (strain RM4018)</name>
    <name type="common">Arcobacter butzleri</name>
    <dbReference type="NCBI Taxonomy" id="367737"/>
    <lineage>
        <taxon>Bacteria</taxon>
        <taxon>Pseudomonadati</taxon>
        <taxon>Campylobacterota</taxon>
        <taxon>Epsilonproteobacteria</taxon>
        <taxon>Campylobacterales</taxon>
        <taxon>Arcobacteraceae</taxon>
        <taxon>Aliarcobacter</taxon>
    </lineage>
</organism>